<reference key="1">
    <citation type="journal article" date="2000" name="Nucleic Acids Res.">
        <title>Complete genome sequence of the alkaliphilic bacterium Bacillus halodurans and genomic sequence comparison with Bacillus subtilis.</title>
        <authorList>
            <person name="Takami H."/>
            <person name="Nakasone K."/>
            <person name="Takaki Y."/>
            <person name="Maeno G."/>
            <person name="Sasaki R."/>
            <person name="Masui N."/>
            <person name="Fuji F."/>
            <person name="Hirama C."/>
            <person name="Nakamura Y."/>
            <person name="Ogasawara N."/>
            <person name="Kuhara S."/>
            <person name="Horikoshi K."/>
        </authorList>
    </citation>
    <scope>NUCLEOTIDE SEQUENCE [LARGE SCALE GENOMIC DNA]</scope>
    <source>
        <strain>ATCC BAA-125 / DSM 18197 / FERM 7344 / JCM 9153 / C-125</strain>
    </source>
</reference>
<feature type="chain" id="PRO_0000177926" description="DNA mismatch repair protein MutL">
    <location>
        <begin position="1"/>
        <end position="637"/>
    </location>
</feature>
<feature type="region of interest" description="Disordered" evidence="2">
    <location>
        <begin position="352"/>
        <end position="384"/>
    </location>
</feature>
<feature type="region of interest" description="Disordered" evidence="2">
    <location>
        <begin position="405"/>
        <end position="430"/>
    </location>
</feature>
<dbReference type="EMBL" id="BA000004">
    <property type="protein sequence ID" value="BAB06087.1"/>
    <property type="molecule type" value="Genomic_DNA"/>
</dbReference>
<dbReference type="PIR" id="H83945">
    <property type="entry name" value="H83945"/>
</dbReference>
<dbReference type="RefSeq" id="WP_010898522.1">
    <property type="nucleotide sequence ID" value="NC_002570.2"/>
</dbReference>
<dbReference type="SMR" id="Q9KAC1"/>
<dbReference type="STRING" id="272558.gene:10728266"/>
<dbReference type="KEGG" id="bha:BH2368"/>
<dbReference type="eggNOG" id="COG0323">
    <property type="taxonomic scope" value="Bacteria"/>
</dbReference>
<dbReference type="HOGENOM" id="CLU_004131_4_1_9"/>
<dbReference type="OrthoDB" id="9763467at2"/>
<dbReference type="Proteomes" id="UP000001258">
    <property type="component" value="Chromosome"/>
</dbReference>
<dbReference type="GO" id="GO:0032300">
    <property type="term" value="C:mismatch repair complex"/>
    <property type="evidence" value="ECO:0007669"/>
    <property type="project" value="InterPro"/>
</dbReference>
<dbReference type="GO" id="GO:0005524">
    <property type="term" value="F:ATP binding"/>
    <property type="evidence" value="ECO:0007669"/>
    <property type="project" value="InterPro"/>
</dbReference>
<dbReference type="GO" id="GO:0016887">
    <property type="term" value="F:ATP hydrolysis activity"/>
    <property type="evidence" value="ECO:0007669"/>
    <property type="project" value="InterPro"/>
</dbReference>
<dbReference type="GO" id="GO:0140664">
    <property type="term" value="F:ATP-dependent DNA damage sensor activity"/>
    <property type="evidence" value="ECO:0007669"/>
    <property type="project" value="InterPro"/>
</dbReference>
<dbReference type="GO" id="GO:0030983">
    <property type="term" value="F:mismatched DNA binding"/>
    <property type="evidence" value="ECO:0007669"/>
    <property type="project" value="InterPro"/>
</dbReference>
<dbReference type="GO" id="GO:0006298">
    <property type="term" value="P:mismatch repair"/>
    <property type="evidence" value="ECO:0007669"/>
    <property type="project" value="UniProtKB-UniRule"/>
</dbReference>
<dbReference type="CDD" id="cd16926">
    <property type="entry name" value="HATPase_MutL-MLH-PMS-like"/>
    <property type="match status" value="1"/>
</dbReference>
<dbReference type="CDD" id="cd00782">
    <property type="entry name" value="MutL_Trans"/>
    <property type="match status" value="1"/>
</dbReference>
<dbReference type="FunFam" id="3.30.1370.100:FF:000004">
    <property type="entry name" value="DNA mismatch repair endonuclease MutL"/>
    <property type="match status" value="1"/>
</dbReference>
<dbReference type="FunFam" id="3.30.565.10:FF:000003">
    <property type="entry name" value="DNA mismatch repair endonuclease MutL"/>
    <property type="match status" value="1"/>
</dbReference>
<dbReference type="Gene3D" id="3.30.230.10">
    <property type="match status" value="1"/>
</dbReference>
<dbReference type="Gene3D" id="3.30.565.10">
    <property type="entry name" value="Histidine kinase-like ATPase, C-terminal domain"/>
    <property type="match status" value="1"/>
</dbReference>
<dbReference type="Gene3D" id="3.30.1540.20">
    <property type="entry name" value="MutL, C-terminal domain, dimerisation subdomain"/>
    <property type="match status" value="1"/>
</dbReference>
<dbReference type="Gene3D" id="3.30.1370.100">
    <property type="entry name" value="MutL, C-terminal domain, regulatory subdomain"/>
    <property type="match status" value="1"/>
</dbReference>
<dbReference type="HAMAP" id="MF_00149">
    <property type="entry name" value="DNA_mis_repair"/>
    <property type="match status" value="1"/>
</dbReference>
<dbReference type="InterPro" id="IPR014762">
    <property type="entry name" value="DNA_mismatch_repair_CS"/>
</dbReference>
<dbReference type="InterPro" id="IPR020667">
    <property type="entry name" value="DNA_mismatch_repair_MutL"/>
</dbReference>
<dbReference type="InterPro" id="IPR013507">
    <property type="entry name" value="DNA_mismatch_S5_2-like"/>
</dbReference>
<dbReference type="InterPro" id="IPR036890">
    <property type="entry name" value="HATPase_C_sf"/>
</dbReference>
<dbReference type="InterPro" id="IPR002099">
    <property type="entry name" value="MutL/Mlh/PMS"/>
</dbReference>
<dbReference type="InterPro" id="IPR038973">
    <property type="entry name" value="MutL/Mlh/Pms-like"/>
</dbReference>
<dbReference type="InterPro" id="IPR014790">
    <property type="entry name" value="MutL_C"/>
</dbReference>
<dbReference type="InterPro" id="IPR042120">
    <property type="entry name" value="MutL_C_dimsub"/>
</dbReference>
<dbReference type="InterPro" id="IPR042121">
    <property type="entry name" value="MutL_C_regsub"/>
</dbReference>
<dbReference type="InterPro" id="IPR037198">
    <property type="entry name" value="MutL_C_sf"/>
</dbReference>
<dbReference type="InterPro" id="IPR020568">
    <property type="entry name" value="Ribosomal_Su5_D2-typ_SF"/>
</dbReference>
<dbReference type="InterPro" id="IPR014721">
    <property type="entry name" value="Ribsml_uS5_D2-typ_fold_subgr"/>
</dbReference>
<dbReference type="NCBIfam" id="TIGR00585">
    <property type="entry name" value="mutl"/>
    <property type="match status" value="1"/>
</dbReference>
<dbReference type="NCBIfam" id="NF000950">
    <property type="entry name" value="PRK00095.1-3"/>
    <property type="match status" value="1"/>
</dbReference>
<dbReference type="PANTHER" id="PTHR10073">
    <property type="entry name" value="DNA MISMATCH REPAIR PROTEIN MLH, PMS, MUTL"/>
    <property type="match status" value="1"/>
</dbReference>
<dbReference type="PANTHER" id="PTHR10073:SF12">
    <property type="entry name" value="DNA MISMATCH REPAIR PROTEIN MLH1"/>
    <property type="match status" value="1"/>
</dbReference>
<dbReference type="Pfam" id="PF01119">
    <property type="entry name" value="DNA_mis_repair"/>
    <property type="match status" value="1"/>
</dbReference>
<dbReference type="Pfam" id="PF13589">
    <property type="entry name" value="HATPase_c_3"/>
    <property type="match status" value="1"/>
</dbReference>
<dbReference type="Pfam" id="PF08676">
    <property type="entry name" value="MutL_C"/>
    <property type="match status" value="1"/>
</dbReference>
<dbReference type="SMART" id="SM01340">
    <property type="entry name" value="DNA_mis_repair"/>
    <property type="match status" value="1"/>
</dbReference>
<dbReference type="SMART" id="SM00853">
    <property type="entry name" value="MutL_C"/>
    <property type="match status" value="1"/>
</dbReference>
<dbReference type="SUPFAM" id="SSF55874">
    <property type="entry name" value="ATPase domain of HSP90 chaperone/DNA topoisomerase II/histidine kinase"/>
    <property type="match status" value="1"/>
</dbReference>
<dbReference type="SUPFAM" id="SSF118116">
    <property type="entry name" value="DNA mismatch repair protein MutL"/>
    <property type="match status" value="1"/>
</dbReference>
<dbReference type="SUPFAM" id="SSF54211">
    <property type="entry name" value="Ribosomal protein S5 domain 2-like"/>
    <property type="match status" value="1"/>
</dbReference>
<dbReference type="PROSITE" id="PS00058">
    <property type="entry name" value="DNA_MISMATCH_REPAIR_1"/>
    <property type="match status" value="1"/>
</dbReference>
<organism>
    <name type="scientific">Halalkalibacterium halodurans (strain ATCC BAA-125 / DSM 18197 / FERM 7344 / JCM 9153 / C-125)</name>
    <name type="common">Bacillus halodurans</name>
    <dbReference type="NCBI Taxonomy" id="272558"/>
    <lineage>
        <taxon>Bacteria</taxon>
        <taxon>Bacillati</taxon>
        <taxon>Bacillota</taxon>
        <taxon>Bacilli</taxon>
        <taxon>Bacillales</taxon>
        <taxon>Bacillaceae</taxon>
        <taxon>Halalkalibacterium (ex Joshi et al. 2022)</taxon>
    </lineage>
</organism>
<proteinExistence type="inferred from homology"/>
<sequence>MAKIIKLDDHLSNKIAAGEVVERPASVVKELVENALDANSRKITIEVEAGGLDRIRVIDDGDGIEREDVETAFFRHATSKIKTDKDLFQIATLGFRGEALPSIASVSHVQIKTSTGGDGGTEMVLEGGVIKKIGSTAMGKGTDLTVTQLFYNTPARLKYVKTVHTELGNISDVVNRLALAHPYVSFQLFHNGKNVLRTSGNGDQLQVIAAIYGRTVAKQMVPLSGETIDFTVSGFAAKPEVTRASRQYMSLLVNGRYIRNVALSKAIQQGFHTLLPIGRYPIAIVNIELDPQLIDVNVHPSKLEVRVSKEEELCRLVTETIERAFKKEQLIPEATKPTGGKQKSEQLSFTLDDFTSAKPSEDRGSTSSNEENEQRSSIDKNVLFQEERKLSNDLPSINMVREASASVEPALEKEPPAAELTAGAKGAMEQASMEEETSNSLPANRVPTMYPIGQMHGTYILAQNDQGLYIIDQHAAQERMKYEYFREKVGEVTNELQELIVPITVECTLQEAAYIEEHLEDLKQVGLFFEEFGPQTFMIRQHPTWFPKGLEEETIREMIDQLMEKRKVDIKKLREEVAILMSCKAAIKANRHLRHDEMYALLEALRKSSDPFTCPHGRPIIVQITTYEMEKMFKRVM</sequence>
<comment type="function">
    <text evidence="1">This protein is involved in the repair of mismatches in DNA. It is required for dam-dependent methyl-directed DNA mismatch repair. May act as a 'molecular matchmaker', a protein that promotes the formation of a stable complex between two or more DNA-binding proteins in an ATP-dependent manner without itself being part of a final effector complex.</text>
</comment>
<comment type="similarity">
    <text evidence="1">Belongs to the DNA mismatch repair MutL/HexB family.</text>
</comment>
<accession>Q9KAC1</accession>
<name>MUTL_HALH5</name>
<protein>
    <recommendedName>
        <fullName evidence="1">DNA mismatch repair protein MutL</fullName>
    </recommendedName>
</protein>
<gene>
    <name evidence="1" type="primary">mutL</name>
    <name type="ordered locus">BH2368</name>
</gene>
<evidence type="ECO:0000255" key="1">
    <source>
        <dbReference type="HAMAP-Rule" id="MF_00149"/>
    </source>
</evidence>
<evidence type="ECO:0000256" key="2">
    <source>
        <dbReference type="SAM" id="MobiDB-lite"/>
    </source>
</evidence>
<keyword id="KW-0227">DNA damage</keyword>
<keyword id="KW-0234">DNA repair</keyword>
<keyword id="KW-1185">Reference proteome</keyword>